<sequence length="317" mass="35719">MTTITKERIELFVKSPLENGLTRGEQMELARIALASLDAETVRYLNKFSGTCVTLEQQPNAADDVAVYIPLYAAPPVPERERIRREHAEWSDKTFGDVGPVGPLKHLSKEALEAAADPSDPLEWADMQFLLWDAQRRMGISDEFITRAMIEKLEINKTRQWPEPKDGEPRLHIKEQPESVVPEECPAELPYAQVKAVADLYALCWQSGEVVTYTPDPEKATIWINNYSGTCVQEYVKLERLQEALAGNSPVIPGGWISCSERMPDNDESKPIAIFTGKCLGQGMFVATYDDDGFFDYWEGMEIIGVSHWMQLPDPPL</sequence>
<reference key="1">
    <citation type="journal article" date="1993" name="Mol. Microbiol.">
        <title>The int genes of bacteriophages P22 and lambda are regulated by different mechanisms.</title>
        <authorList>
            <person name="Wulff D.L."/>
            <person name="Ho Y.S."/>
            <person name="Powers S."/>
            <person name="Rosenberg M."/>
        </authorList>
    </citation>
    <scope>NUCLEOTIDE SEQUENCE</scope>
</reference>
<reference key="2">
    <citation type="journal article" date="2000" name="J. Bacteriol.">
        <title>Sequence of the genome of Salmonella bacteriophage P22.</title>
        <authorList>
            <person name="Vander Byl C.S."/>
            <person name="Kropinski A.M.B."/>
        </authorList>
    </citation>
    <scope>NUCLEOTIDE SEQUENCE [LARGE SCALE GENOMIC DNA]</scope>
</reference>
<reference key="3">
    <citation type="journal article" date="2003" name="J. Bacteriol.">
        <title>Corrected sequence of the bacteriophage P22 genome.</title>
        <authorList>
            <person name="Pedulla M.L."/>
            <person name="Ford M.E."/>
            <person name="Karthikeyan T."/>
            <person name="Houtz J.M."/>
            <person name="Hendrix R.W."/>
            <person name="Hatfull G.F."/>
            <person name="Poteete A.R."/>
            <person name="Gilcrease E.B."/>
            <person name="Winn-Stapley D.A."/>
            <person name="Casjens S.R."/>
        </authorList>
    </citation>
    <scope>NUCLEOTIDE SEQUENCE [LARGE SCALE GENOMIC DNA]</scope>
</reference>
<protein>
    <recommendedName>
        <fullName>Eaa protein</fullName>
    </recommendedName>
</protein>
<organism>
    <name type="scientific">Salmonella phage P22</name>
    <name type="common">Bacteriophage P22</name>
    <dbReference type="NCBI Taxonomy" id="10754"/>
    <lineage>
        <taxon>Viruses</taxon>
        <taxon>Duplodnaviria</taxon>
        <taxon>Heunggongvirae</taxon>
        <taxon>Uroviricota</taxon>
        <taxon>Caudoviricetes</taxon>
        <taxon>Lederbergvirus</taxon>
    </lineage>
</organism>
<organismHost>
    <name type="scientific">Salmonella typhimurium</name>
    <dbReference type="NCBI Taxonomy" id="90371"/>
</organismHost>
<feature type="chain" id="PRO_0000077768" description="Eaa protein">
    <location>
        <begin position="1"/>
        <end position="317"/>
    </location>
</feature>
<gene>
    <name type="primary">eaa</name>
</gene>
<dbReference type="EMBL" id="L06296">
    <property type="protein sequence ID" value="AAC18882.1"/>
    <property type="molecule type" value="Unassigned_DNA"/>
</dbReference>
<dbReference type="EMBL" id="AF217253">
    <property type="protein sequence ID" value="AAF75006.1"/>
    <property type="molecule type" value="Genomic_DNA"/>
</dbReference>
<dbReference type="EMBL" id="BK000583">
    <property type="protein sequence ID" value="DAA01002.1"/>
    <property type="molecule type" value="Genomic_DNA"/>
</dbReference>
<dbReference type="PIR" id="S35282">
    <property type="entry name" value="S35282"/>
</dbReference>
<dbReference type="RefSeq" id="NP_059588.1">
    <property type="nucleotide sequence ID" value="NC_002371.2"/>
</dbReference>
<dbReference type="GeneID" id="1262801"/>
<dbReference type="KEGG" id="vg:1262801"/>
<dbReference type="OrthoDB" id="21071at10239"/>
<dbReference type="Proteomes" id="UP000001795">
    <property type="component" value="Segment"/>
</dbReference>
<dbReference type="Proteomes" id="UP000007960">
    <property type="component" value="Segment"/>
</dbReference>
<dbReference type="InterPro" id="IPR007538">
    <property type="entry name" value="dATP/dGTP_dipphydrolase_MazZ"/>
</dbReference>
<dbReference type="InterPro" id="IPR007539">
    <property type="entry name" value="DUF551"/>
</dbReference>
<dbReference type="Pfam" id="PF04447">
    <property type="entry name" value="dATP-dGTP_PPHyd"/>
    <property type="match status" value="1"/>
</dbReference>
<dbReference type="Pfam" id="PF04448">
    <property type="entry name" value="DUF551"/>
    <property type="match status" value="1"/>
</dbReference>
<accession>Q03544</accession>
<accession>Q7PCH0</accession>
<name>VEAA_BPP22</name>
<keyword id="KW-1185">Reference proteome</keyword>
<proteinExistence type="predicted"/>